<reference key="1">
    <citation type="journal article" date="2000" name="Nature">
        <title>Sequence and analysis of chromosome 1 of the plant Arabidopsis thaliana.</title>
        <authorList>
            <person name="Theologis A."/>
            <person name="Ecker J.R."/>
            <person name="Palm C.J."/>
            <person name="Federspiel N.A."/>
            <person name="Kaul S."/>
            <person name="White O."/>
            <person name="Alonso J."/>
            <person name="Altafi H."/>
            <person name="Araujo R."/>
            <person name="Bowman C.L."/>
            <person name="Brooks S.Y."/>
            <person name="Buehler E."/>
            <person name="Chan A."/>
            <person name="Chao Q."/>
            <person name="Chen H."/>
            <person name="Cheuk R.F."/>
            <person name="Chin C.W."/>
            <person name="Chung M.K."/>
            <person name="Conn L."/>
            <person name="Conway A.B."/>
            <person name="Conway A.R."/>
            <person name="Creasy T.H."/>
            <person name="Dewar K."/>
            <person name="Dunn P."/>
            <person name="Etgu P."/>
            <person name="Feldblyum T.V."/>
            <person name="Feng J.-D."/>
            <person name="Fong B."/>
            <person name="Fujii C.Y."/>
            <person name="Gill J.E."/>
            <person name="Goldsmith A.D."/>
            <person name="Haas B."/>
            <person name="Hansen N.F."/>
            <person name="Hughes B."/>
            <person name="Huizar L."/>
            <person name="Hunter J.L."/>
            <person name="Jenkins J."/>
            <person name="Johnson-Hopson C."/>
            <person name="Khan S."/>
            <person name="Khaykin E."/>
            <person name="Kim C.J."/>
            <person name="Koo H.L."/>
            <person name="Kremenetskaia I."/>
            <person name="Kurtz D.B."/>
            <person name="Kwan A."/>
            <person name="Lam B."/>
            <person name="Langin-Hooper S."/>
            <person name="Lee A."/>
            <person name="Lee J.M."/>
            <person name="Lenz C.A."/>
            <person name="Li J.H."/>
            <person name="Li Y.-P."/>
            <person name="Lin X."/>
            <person name="Liu S.X."/>
            <person name="Liu Z.A."/>
            <person name="Luros J.S."/>
            <person name="Maiti R."/>
            <person name="Marziali A."/>
            <person name="Militscher J."/>
            <person name="Miranda M."/>
            <person name="Nguyen M."/>
            <person name="Nierman W.C."/>
            <person name="Osborne B.I."/>
            <person name="Pai G."/>
            <person name="Peterson J."/>
            <person name="Pham P.K."/>
            <person name="Rizzo M."/>
            <person name="Rooney T."/>
            <person name="Rowley D."/>
            <person name="Sakano H."/>
            <person name="Salzberg S.L."/>
            <person name="Schwartz J.R."/>
            <person name="Shinn P."/>
            <person name="Southwick A.M."/>
            <person name="Sun H."/>
            <person name="Tallon L.J."/>
            <person name="Tambunga G."/>
            <person name="Toriumi M.J."/>
            <person name="Town C.D."/>
            <person name="Utterback T."/>
            <person name="Van Aken S."/>
            <person name="Vaysberg M."/>
            <person name="Vysotskaia V.S."/>
            <person name="Walker M."/>
            <person name="Wu D."/>
            <person name="Yu G."/>
            <person name="Fraser C.M."/>
            <person name="Venter J.C."/>
            <person name="Davis R.W."/>
        </authorList>
    </citation>
    <scope>NUCLEOTIDE SEQUENCE [LARGE SCALE GENOMIC DNA]</scope>
    <source>
        <strain>cv. Columbia</strain>
    </source>
</reference>
<reference key="2">
    <citation type="journal article" date="2017" name="Plant J.">
        <title>Araport11: a complete reannotation of the Arabidopsis thaliana reference genome.</title>
        <authorList>
            <person name="Cheng C.Y."/>
            <person name="Krishnakumar V."/>
            <person name="Chan A.P."/>
            <person name="Thibaud-Nissen F."/>
            <person name="Schobel S."/>
            <person name="Town C.D."/>
        </authorList>
    </citation>
    <scope>GENOME REANNOTATION</scope>
    <source>
        <strain>cv. Columbia</strain>
    </source>
</reference>
<reference key="3">
    <citation type="journal article" date="2003" name="Science">
        <title>Empirical analysis of transcriptional activity in the Arabidopsis genome.</title>
        <authorList>
            <person name="Yamada K."/>
            <person name="Lim J."/>
            <person name="Dale J.M."/>
            <person name="Chen H."/>
            <person name="Shinn P."/>
            <person name="Palm C.J."/>
            <person name="Southwick A.M."/>
            <person name="Wu H.C."/>
            <person name="Kim C.J."/>
            <person name="Nguyen M."/>
            <person name="Pham P.K."/>
            <person name="Cheuk R.F."/>
            <person name="Karlin-Newmann G."/>
            <person name="Liu S.X."/>
            <person name="Lam B."/>
            <person name="Sakano H."/>
            <person name="Wu T."/>
            <person name="Yu G."/>
            <person name="Miranda M."/>
            <person name="Quach H.L."/>
            <person name="Tripp M."/>
            <person name="Chang C.H."/>
            <person name="Lee J.M."/>
            <person name="Toriumi M.J."/>
            <person name="Chan M.M."/>
            <person name="Tang C.C."/>
            <person name="Onodera C.S."/>
            <person name="Deng J.M."/>
            <person name="Akiyama K."/>
            <person name="Ansari Y."/>
            <person name="Arakawa T."/>
            <person name="Banh J."/>
            <person name="Banno F."/>
            <person name="Bowser L."/>
            <person name="Brooks S.Y."/>
            <person name="Carninci P."/>
            <person name="Chao Q."/>
            <person name="Choy N."/>
            <person name="Enju A."/>
            <person name="Goldsmith A.D."/>
            <person name="Gurjal M."/>
            <person name="Hansen N.F."/>
            <person name="Hayashizaki Y."/>
            <person name="Johnson-Hopson C."/>
            <person name="Hsuan V.W."/>
            <person name="Iida K."/>
            <person name="Karnes M."/>
            <person name="Khan S."/>
            <person name="Koesema E."/>
            <person name="Ishida J."/>
            <person name="Jiang P.X."/>
            <person name="Jones T."/>
            <person name="Kawai J."/>
            <person name="Kamiya A."/>
            <person name="Meyers C."/>
            <person name="Nakajima M."/>
            <person name="Narusaka M."/>
            <person name="Seki M."/>
            <person name="Sakurai T."/>
            <person name="Satou M."/>
            <person name="Tamse R."/>
            <person name="Vaysberg M."/>
            <person name="Wallender E.K."/>
            <person name="Wong C."/>
            <person name="Yamamura Y."/>
            <person name="Yuan S."/>
            <person name="Shinozaki K."/>
            <person name="Davis R.W."/>
            <person name="Theologis A."/>
            <person name="Ecker J.R."/>
        </authorList>
    </citation>
    <scope>NUCLEOTIDE SEQUENCE [LARGE SCALE MRNA]</scope>
    <source>
        <strain>cv. Columbia</strain>
    </source>
</reference>
<reference key="4">
    <citation type="submission" date="2005-03" db="EMBL/GenBank/DDBJ databases">
        <title>Large-scale analysis of RIKEN Arabidopsis full-length (RAFL) cDNAs.</title>
        <authorList>
            <person name="Totoki Y."/>
            <person name="Seki M."/>
            <person name="Ishida J."/>
            <person name="Nakajima M."/>
            <person name="Enju A."/>
            <person name="Kamiya A."/>
            <person name="Narusaka M."/>
            <person name="Shin-i T."/>
            <person name="Nakagawa M."/>
            <person name="Sakamoto N."/>
            <person name="Oishi K."/>
            <person name="Kohara Y."/>
            <person name="Kobayashi M."/>
            <person name="Toyoda A."/>
            <person name="Sakaki Y."/>
            <person name="Sakurai T."/>
            <person name="Iida K."/>
            <person name="Akiyama K."/>
            <person name="Satou M."/>
            <person name="Toyoda T."/>
            <person name="Konagaya A."/>
            <person name="Carninci P."/>
            <person name="Kawai J."/>
            <person name="Hayashizaki Y."/>
            <person name="Shinozaki K."/>
        </authorList>
    </citation>
    <scope>NUCLEOTIDE SEQUENCE [LARGE SCALE MRNA] OF 263-612</scope>
    <source>
        <strain>cv. Columbia</strain>
    </source>
</reference>
<reference key="5">
    <citation type="journal article" date="2001" name="Trends Plant Sci.">
        <title>The U-box protein family in plants.</title>
        <authorList>
            <person name="Azevedo C."/>
            <person name="Santos-Rosa M.J."/>
            <person name="Shirasu K."/>
        </authorList>
    </citation>
    <scope>GENE FAMILY ORGANIZATION</scope>
    <scope>NOMENCLATURE</scope>
</reference>
<reference key="6">
    <citation type="journal article" date="2004" name="Plant Physiol.">
        <title>A large complement of the predicted Arabidopsis ARM repeat proteins are members of the U-box E3 ubiquitin ligase family.</title>
        <authorList>
            <person name="Mudgil Y."/>
            <person name="Shiu S.-H."/>
            <person name="Stone S.L."/>
            <person name="Salt J.N."/>
            <person name="Goring D.R."/>
        </authorList>
    </citation>
    <scope>GENE FAMILY ORGANIZATION</scope>
</reference>
<accession>Q8GUG9</accession>
<accession>O23121</accession>
<accession>Q56WV7</accession>
<gene>
    <name type="primary">PUB11</name>
    <name type="ordered locus">At1g23030</name>
    <name type="ORF">F10G19.3</name>
</gene>
<organism>
    <name type="scientific">Arabidopsis thaliana</name>
    <name type="common">Mouse-ear cress</name>
    <dbReference type="NCBI Taxonomy" id="3702"/>
    <lineage>
        <taxon>Eukaryota</taxon>
        <taxon>Viridiplantae</taxon>
        <taxon>Streptophyta</taxon>
        <taxon>Embryophyta</taxon>
        <taxon>Tracheophyta</taxon>
        <taxon>Spermatophyta</taxon>
        <taxon>Magnoliopsida</taxon>
        <taxon>eudicotyledons</taxon>
        <taxon>Gunneridae</taxon>
        <taxon>Pentapetalae</taxon>
        <taxon>rosids</taxon>
        <taxon>malvids</taxon>
        <taxon>Brassicales</taxon>
        <taxon>Brassicaceae</taxon>
        <taxon>Camelineae</taxon>
        <taxon>Arabidopsis</taxon>
    </lineage>
</organism>
<feature type="chain" id="PRO_0000322156" description="U-box domain-containing protein 11">
    <location>
        <begin position="1"/>
        <end position="612"/>
    </location>
</feature>
<feature type="domain" description="U-box">
    <location>
        <begin position="240"/>
        <end position="314"/>
    </location>
</feature>
<feature type="repeat" description="ARM 1">
    <location>
        <begin position="363"/>
        <end position="402"/>
    </location>
</feature>
<feature type="repeat" description="ARM 2">
    <location>
        <begin position="404"/>
        <end position="443"/>
    </location>
</feature>
<feature type="repeat" description="ARM 3">
    <location>
        <begin position="445"/>
        <end position="484"/>
    </location>
</feature>
<feature type="repeat" description="ARM 4">
    <location>
        <begin position="486"/>
        <end position="526"/>
    </location>
</feature>
<feature type="repeat" description="ARM 5">
    <location>
        <begin position="528"/>
        <end position="567"/>
    </location>
</feature>
<feature type="coiled-coil region" evidence="2">
    <location>
        <begin position="127"/>
        <end position="196"/>
    </location>
</feature>
<feature type="sequence conflict" description="In Ref. 3; AAO00878." evidence="3" ref="3">
    <original>W</original>
    <variation>C</variation>
    <location>
        <position position="67"/>
    </location>
</feature>
<dbReference type="EC" id="2.3.2.27"/>
<dbReference type="EMBL" id="AF000657">
    <property type="protein sequence ID" value="AAB72157.1"/>
    <property type="status" value="ALT_SEQ"/>
    <property type="molecule type" value="Genomic_DNA"/>
</dbReference>
<dbReference type="EMBL" id="CP002684">
    <property type="protein sequence ID" value="AEE30324.1"/>
    <property type="molecule type" value="Genomic_DNA"/>
</dbReference>
<dbReference type="EMBL" id="BT002518">
    <property type="protein sequence ID" value="AAO00878.1"/>
    <property type="molecule type" value="mRNA"/>
</dbReference>
<dbReference type="EMBL" id="AK221923">
    <property type="protein sequence ID" value="BAD94341.1"/>
    <property type="molecule type" value="mRNA"/>
</dbReference>
<dbReference type="PIR" id="D86364">
    <property type="entry name" value="D86364"/>
</dbReference>
<dbReference type="RefSeq" id="NP_173716.1">
    <property type="nucleotide sequence ID" value="NM_102151.5"/>
</dbReference>
<dbReference type="SMR" id="Q8GUG9"/>
<dbReference type="FunCoup" id="Q8GUG9">
    <property type="interactions" value="404"/>
</dbReference>
<dbReference type="STRING" id="3702.Q8GUG9"/>
<dbReference type="PaxDb" id="3702-AT1G23030.1"/>
<dbReference type="EnsemblPlants" id="AT1G23030.1">
    <property type="protein sequence ID" value="AT1G23030.1"/>
    <property type="gene ID" value="AT1G23030"/>
</dbReference>
<dbReference type="GeneID" id="838911"/>
<dbReference type="Gramene" id="AT1G23030.1">
    <property type="protein sequence ID" value="AT1G23030.1"/>
    <property type="gene ID" value="AT1G23030"/>
</dbReference>
<dbReference type="KEGG" id="ath:AT1G23030"/>
<dbReference type="Araport" id="AT1G23030"/>
<dbReference type="TAIR" id="AT1G23030">
    <property type="gene designation" value="PUB11"/>
</dbReference>
<dbReference type="eggNOG" id="KOG0167">
    <property type="taxonomic scope" value="Eukaryota"/>
</dbReference>
<dbReference type="HOGENOM" id="CLU_006348_5_1_1"/>
<dbReference type="InParanoid" id="Q8GUG9"/>
<dbReference type="OMA" id="INFRFQC"/>
<dbReference type="PhylomeDB" id="Q8GUG9"/>
<dbReference type="UniPathway" id="UPA00143"/>
<dbReference type="PRO" id="PR:Q8GUG9"/>
<dbReference type="Proteomes" id="UP000006548">
    <property type="component" value="Chromosome 1"/>
</dbReference>
<dbReference type="ExpressionAtlas" id="Q8GUG9">
    <property type="expression patterns" value="baseline and differential"/>
</dbReference>
<dbReference type="GO" id="GO:0004842">
    <property type="term" value="F:ubiquitin-protein transferase activity"/>
    <property type="evidence" value="ECO:0000314"/>
    <property type="project" value="TAIR"/>
</dbReference>
<dbReference type="GO" id="GO:0051865">
    <property type="term" value="P:protein autoubiquitination"/>
    <property type="evidence" value="ECO:0000314"/>
    <property type="project" value="TAIR"/>
</dbReference>
<dbReference type="GO" id="GO:0016567">
    <property type="term" value="P:protein ubiquitination"/>
    <property type="evidence" value="ECO:0000314"/>
    <property type="project" value="TAIR"/>
</dbReference>
<dbReference type="GO" id="GO:0090333">
    <property type="term" value="P:regulation of stomatal closure"/>
    <property type="evidence" value="ECO:0000315"/>
    <property type="project" value="TAIR"/>
</dbReference>
<dbReference type="CDD" id="cd16664">
    <property type="entry name" value="RING-Ubox_PUB"/>
    <property type="match status" value="1"/>
</dbReference>
<dbReference type="FunFam" id="1.25.10.10:FF:000082">
    <property type="entry name" value="RING-type E3 ubiquitin transferase"/>
    <property type="match status" value="1"/>
</dbReference>
<dbReference type="FunFam" id="3.30.40.10:FF:000292">
    <property type="entry name" value="RING-type E3 ubiquitin transferase"/>
    <property type="match status" value="1"/>
</dbReference>
<dbReference type="Gene3D" id="1.25.10.10">
    <property type="entry name" value="Leucine-rich Repeat Variant"/>
    <property type="match status" value="1"/>
</dbReference>
<dbReference type="Gene3D" id="3.30.40.10">
    <property type="entry name" value="Zinc/RING finger domain, C3HC4 (zinc finger)"/>
    <property type="match status" value="1"/>
</dbReference>
<dbReference type="InterPro" id="IPR011989">
    <property type="entry name" value="ARM-like"/>
</dbReference>
<dbReference type="InterPro" id="IPR016024">
    <property type="entry name" value="ARM-type_fold"/>
</dbReference>
<dbReference type="InterPro" id="IPR000225">
    <property type="entry name" value="Armadillo"/>
</dbReference>
<dbReference type="InterPro" id="IPR045210">
    <property type="entry name" value="RING-Ubox_PUB"/>
</dbReference>
<dbReference type="InterPro" id="IPR003613">
    <property type="entry name" value="Ubox_domain"/>
</dbReference>
<dbReference type="InterPro" id="IPR013083">
    <property type="entry name" value="Znf_RING/FYVE/PHD"/>
</dbReference>
<dbReference type="PANTHER" id="PTHR23315">
    <property type="entry name" value="U BOX DOMAIN-CONTAINING"/>
    <property type="match status" value="1"/>
</dbReference>
<dbReference type="PANTHER" id="PTHR23315:SF322">
    <property type="entry name" value="U-BOX DOMAIN-CONTAINING PROTEIN 11"/>
    <property type="match status" value="1"/>
</dbReference>
<dbReference type="Pfam" id="PF00514">
    <property type="entry name" value="Arm"/>
    <property type="match status" value="2"/>
</dbReference>
<dbReference type="Pfam" id="PF25368">
    <property type="entry name" value="PUB10_N"/>
    <property type="match status" value="1"/>
</dbReference>
<dbReference type="Pfam" id="PF04564">
    <property type="entry name" value="U-box"/>
    <property type="match status" value="1"/>
</dbReference>
<dbReference type="SMART" id="SM00185">
    <property type="entry name" value="ARM"/>
    <property type="match status" value="5"/>
</dbReference>
<dbReference type="SMART" id="SM00504">
    <property type="entry name" value="Ubox"/>
    <property type="match status" value="1"/>
</dbReference>
<dbReference type="SUPFAM" id="SSF48371">
    <property type="entry name" value="ARM repeat"/>
    <property type="match status" value="1"/>
</dbReference>
<dbReference type="SUPFAM" id="SSF57850">
    <property type="entry name" value="RING/U-box"/>
    <property type="match status" value="1"/>
</dbReference>
<dbReference type="PROSITE" id="PS50176">
    <property type="entry name" value="ARM_REPEAT"/>
    <property type="match status" value="3"/>
</dbReference>
<dbReference type="PROSITE" id="PS51698">
    <property type="entry name" value="U_BOX"/>
    <property type="match status" value="1"/>
</dbReference>
<proteinExistence type="evidence at transcript level"/>
<comment type="function">
    <text evidence="1">Functions as an E3 ubiquitin ligase.</text>
</comment>
<comment type="catalytic activity">
    <reaction>
        <text>S-ubiquitinyl-[E2 ubiquitin-conjugating enzyme]-L-cysteine + [acceptor protein]-L-lysine = [E2 ubiquitin-conjugating enzyme]-L-cysteine + N(6)-ubiquitinyl-[acceptor protein]-L-lysine.</text>
        <dbReference type="EC" id="2.3.2.27"/>
    </reaction>
</comment>
<comment type="pathway">
    <text>Protein modification; protein ubiquitination.</text>
</comment>
<comment type="sequence caution" evidence="3">
    <conflict type="erroneous gene model prediction">
        <sequence resource="EMBL-CDS" id="AAB72157"/>
    </conflict>
</comment>
<name>PUB11_ARATH</name>
<sequence length="612" mass="67356">MAGGIVSPASLLDLIADIVEIPLNTGMFKKDCADLTRRVCLLTHLLEEIRDSTPIDSAASSSSENDWWSDLVVGLQAAKRLLSTARFQARDSSDGAAKRISFQFQCVTWKLEKALSNLPYDLYDISDEVGEQVELARSQLRRAMQRYGSLNSNKFSSALSEPMERDGFSNVIKIKAEEKLESVSETLHFGEEEEKQSSPPLRRSSSISLAYYLSKDADTDRLDKMVNKNTDESKKSDKLTIPVDFLCPVSLELMKDPVIVATGQTYERAYIQRWIDCGNLTCPKTQQKLENFTLTPNYVLRSLISRWCAEHNIEQPAGYINGRTKNSGDMSVIRALVQRLSSRSTEDRRNAVSEIRSLSKRSTDNRILIAEAGAIPVLVNLLTSEDVATQENAITCVLNLSIYENNKELIMFAGAVTSIVQVLRAGTMEARENAAATLFSLSLADENKIIIGGSGAIPALVDLLENGTPRGKKDAATALFNLCIYHGNKGRAVRAGIVTALVKMLSDSTRHRMVDEALTILSVLANNQDAKSAIVKANTLPALIGILQTDQTRNRENAAAILLSLCKRDTEKLITIGRLGAVVPLMDLSKNGTERGKRKAISLLELLRKACQ</sequence>
<keyword id="KW-0175">Coiled coil</keyword>
<keyword id="KW-1185">Reference proteome</keyword>
<keyword id="KW-0677">Repeat</keyword>
<keyword id="KW-0808">Transferase</keyword>
<keyword id="KW-0833">Ubl conjugation pathway</keyword>
<protein>
    <recommendedName>
        <fullName>U-box domain-containing protein 11</fullName>
        <ecNumber>2.3.2.27</ecNumber>
    </recommendedName>
    <alternativeName>
        <fullName>Plant U-box protein 11</fullName>
    </alternativeName>
    <alternativeName>
        <fullName evidence="3">RING-type E3 ubiquitin transferase PUB11</fullName>
    </alternativeName>
</protein>
<evidence type="ECO:0000250" key="1"/>
<evidence type="ECO:0000255" key="2"/>
<evidence type="ECO:0000305" key="3"/>